<reference key="1">
    <citation type="journal article" date="1998" name="Science">
        <title>Complete genome sequence of Treponema pallidum, the syphilis spirochete.</title>
        <authorList>
            <person name="Fraser C.M."/>
            <person name="Norris S.J."/>
            <person name="Weinstock G.M."/>
            <person name="White O."/>
            <person name="Sutton G.G."/>
            <person name="Dodson R.J."/>
            <person name="Gwinn M.L."/>
            <person name="Hickey E.K."/>
            <person name="Clayton R.A."/>
            <person name="Ketchum K.A."/>
            <person name="Sodergren E."/>
            <person name="Hardham J.M."/>
            <person name="McLeod M.P."/>
            <person name="Salzberg S.L."/>
            <person name="Peterson J.D."/>
            <person name="Khalak H.G."/>
            <person name="Richardson D.L."/>
            <person name="Howell J.K."/>
            <person name="Chidambaram M."/>
            <person name="Utterback T.R."/>
            <person name="McDonald L.A."/>
            <person name="Artiach P."/>
            <person name="Bowman C."/>
            <person name="Cotton M.D."/>
            <person name="Fujii C."/>
            <person name="Garland S.A."/>
            <person name="Hatch B."/>
            <person name="Horst K."/>
            <person name="Roberts K.M."/>
            <person name="Sandusky M."/>
            <person name="Weidman J.F."/>
            <person name="Smith H.O."/>
            <person name="Venter J.C."/>
        </authorList>
    </citation>
    <scope>NUCLEOTIDE SEQUENCE [LARGE SCALE GENOMIC DNA]</scope>
    <source>
        <strain>Nichols</strain>
    </source>
</reference>
<organism>
    <name type="scientific">Treponema pallidum (strain Nichols)</name>
    <dbReference type="NCBI Taxonomy" id="243276"/>
    <lineage>
        <taxon>Bacteria</taxon>
        <taxon>Pseudomonadati</taxon>
        <taxon>Spirochaetota</taxon>
        <taxon>Spirochaetia</taxon>
        <taxon>Spirochaetales</taxon>
        <taxon>Treponemataceae</taxon>
        <taxon>Treponema</taxon>
    </lineage>
</organism>
<proteinExistence type="inferred from homology"/>
<accession>O83578</accession>
<comment type="function">
    <text evidence="1">Catalyzes the reversible, stereospecific retro-aldol cleavage of 2-keto-3-deoxy-6-phosphogluconate (KDPG) to pyruvate and D-glyceraldehyde-3-phosphate.</text>
</comment>
<comment type="catalytic activity">
    <reaction evidence="1">
        <text>2-dehydro-3-deoxy-6-phospho-D-gluconate = D-glyceraldehyde 3-phosphate + pyruvate</text>
        <dbReference type="Rhea" id="RHEA:17089"/>
        <dbReference type="ChEBI" id="CHEBI:15361"/>
        <dbReference type="ChEBI" id="CHEBI:57569"/>
        <dbReference type="ChEBI" id="CHEBI:59776"/>
        <dbReference type="EC" id="4.1.2.14"/>
    </reaction>
</comment>
<comment type="pathway">
    <text>Carbohydrate acid metabolism; 2-dehydro-3-deoxy-D-gluconate degradation; D-glyceraldehyde 3-phosphate and pyruvate from 2-dehydro-3-deoxy-D-gluconate: step 2/2.</text>
</comment>
<comment type="subunit">
    <text evidence="1">Homotrimer.</text>
</comment>
<comment type="subcellular location">
    <subcellularLocation>
        <location evidence="1">Cytoplasm</location>
    </subcellularLocation>
</comment>
<comment type="similarity">
    <text evidence="2">Belongs to the KHG/KDPG aldolase family.</text>
</comment>
<protein>
    <recommendedName>
        <fullName evidence="1">2-dehydro-3-deoxy-phosphogluconate aldolase</fullName>
        <ecNumber evidence="1">4.1.2.14</ecNumber>
    </recommendedName>
    <alternativeName>
        <fullName evidence="1">2-keto-3-deoxy-6-phosphogluconate aldolase</fullName>
        <shortName evidence="1">KDPG aldolase</shortName>
    </alternativeName>
</protein>
<evidence type="ECO:0000250" key="1">
    <source>
        <dbReference type="UniProtKB" id="P0A955"/>
    </source>
</evidence>
<evidence type="ECO:0000305" key="2"/>
<gene>
    <name type="primary">eda</name>
    <name type="ordered locus">TP_0568</name>
</gene>
<sequence length="210" mass="22074">MITIFEALERVRVIPVVTLERVEDAVPLARALITGGIRCMEVTFRTLVAAEAIAAIRQECADVLLGAGTVLTVEQAQQAQAAGAQFVVSPGFNPRVVAHCLGHGVPIIPGIASATEIERALEFGISVVKFFPAELLGGTAMMSALARPYTAVRFVPTGGIHLNNLAEYVAHPRVLACGGSWMVPAQSIAAGDFSQVTALSQQTLQIVGVM</sequence>
<dbReference type="EC" id="4.1.2.14" evidence="1"/>
<dbReference type="EMBL" id="AE000520">
    <property type="protein sequence ID" value="AAC65542.1"/>
    <property type="molecule type" value="Genomic_DNA"/>
</dbReference>
<dbReference type="PIR" id="F71308">
    <property type="entry name" value="F71308"/>
</dbReference>
<dbReference type="RefSeq" id="WP_010882015.1">
    <property type="nucleotide sequence ID" value="NC_021490.2"/>
</dbReference>
<dbReference type="SMR" id="O83578"/>
<dbReference type="STRING" id="243276.TP_0568"/>
<dbReference type="EnsemblBacteria" id="AAC65542">
    <property type="protein sequence ID" value="AAC65542"/>
    <property type="gene ID" value="TP_0568"/>
</dbReference>
<dbReference type="KEGG" id="tpa:TP_0568"/>
<dbReference type="KEGG" id="tpw:TPANIC_0568"/>
<dbReference type="eggNOG" id="COG0800">
    <property type="taxonomic scope" value="Bacteria"/>
</dbReference>
<dbReference type="HOGENOM" id="CLU_077795_1_1_12"/>
<dbReference type="OrthoDB" id="9802667at2"/>
<dbReference type="UniPathway" id="UPA00856">
    <property type="reaction ID" value="UER00829"/>
</dbReference>
<dbReference type="Proteomes" id="UP000000811">
    <property type="component" value="Chromosome"/>
</dbReference>
<dbReference type="GO" id="GO:0005737">
    <property type="term" value="C:cytoplasm"/>
    <property type="evidence" value="ECO:0007669"/>
    <property type="project" value="UniProtKB-SubCell"/>
</dbReference>
<dbReference type="GO" id="GO:0008700">
    <property type="term" value="F:(R,S)-4-hydroxy-2-oxoglutarate aldolase activity"/>
    <property type="evidence" value="ECO:0007669"/>
    <property type="project" value="UniProtKB-EC"/>
</dbReference>
<dbReference type="GO" id="GO:0008675">
    <property type="term" value="F:2-dehydro-3-deoxy-phosphogluconate aldolase activity"/>
    <property type="evidence" value="ECO:0007669"/>
    <property type="project" value="UniProtKB-EC"/>
</dbReference>
<dbReference type="CDD" id="cd00452">
    <property type="entry name" value="KDPG_aldolase"/>
    <property type="match status" value="1"/>
</dbReference>
<dbReference type="Gene3D" id="3.20.20.70">
    <property type="entry name" value="Aldolase class I"/>
    <property type="match status" value="1"/>
</dbReference>
<dbReference type="InterPro" id="IPR000887">
    <property type="entry name" value="Aldlse_KDPG_KHG"/>
</dbReference>
<dbReference type="InterPro" id="IPR013785">
    <property type="entry name" value="Aldolase_TIM"/>
</dbReference>
<dbReference type="InterPro" id="IPR031337">
    <property type="entry name" value="KDPG/KHG_AS_1"/>
</dbReference>
<dbReference type="InterPro" id="IPR031338">
    <property type="entry name" value="KDPG/KHG_AS_2"/>
</dbReference>
<dbReference type="NCBIfam" id="TIGR01182">
    <property type="entry name" value="eda"/>
    <property type="match status" value="1"/>
</dbReference>
<dbReference type="NCBIfam" id="NF004325">
    <property type="entry name" value="PRK05718.1"/>
    <property type="match status" value="1"/>
</dbReference>
<dbReference type="PANTHER" id="PTHR30246:SF1">
    <property type="entry name" value="2-DEHYDRO-3-DEOXY-6-PHOSPHOGALACTONATE ALDOLASE-RELATED"/>
    <property type="match status" value="1"/>
</dbReference>
<dbReference type="PANTHER" id="PTHR30246">
    <property type="entry name" value="2-KETO-3-DEOXY-6-PHOSPHOGLUCONATE ALDOLASE"/>
    <property type="match status" value="1"/>
</dbReference>
<dbReference type="Pfam" id="PF01081">
    <property type="entry name" value="Aldolase"/>
    <property type="match status" value="1"/>
</dbReference>
<dbReference type="SUPFAM" id="SSF51569">
    <property type="entry name" value="Aldolase"/>
    <property type="match status" value="1"/>
</dbReference>
<dbReference type="PROSITE" id="PS00159">
    <property type="entry name" value="ALDOLASE_KDPG_KHG_1"/>
    <property type="match status" value="1"/>
</dbReference>
<dbReference type="PROSITE" id="PS00160">
    <property type="entry name" value="ALDOLASE_KDPG_KHG_2"/>
    <property type="match status" value="1"/>
</dbReference>
<feature type="chain" id="PRO_0000201043" description="2-dehydro-3-deoxy-phosphogluconate aldolase">
    <location>
        <begin position="1"/>
        <end position="210"/>
    </location>
</feature>
<feature type="active site" description="Proton acceptor" evidence="1">
    <location>
        <position position="41"/>
    </location>
</feature>
<feature type="active site" description="Schiff-base intermediate with substrate" evidence="1">
    <location>
        <position position="129"/>
    </location>
</feature>
<feature type="binding site" evidence="1">
    <location>
        <position position="45"/>
    </location>
    <ligand>
        <name>pyruvate</name>
        <dbReference type="ChEBI" id="CHEBI:15361"/>
    </ligand>
</feature>
<feature type="binding site" evidence="1">
    <location>
        <position position="69"/>
    </location>
    <ligand>
        <name>pyruvate</name>
        <dbReference type="ChEBI" id="CHEBI:15361"/>
    </ligand>
</feature>
<feature type="binding site" description="covalent" evidence="1">
    <location>
        <position position="129"/>
    </location>
    <ligand>
        <name>pyruvate</name>
        <dbReference type="ChEBI" id="CHEBI:15361"/>
    </ligand>
</feature>
<feature type="site" description="Plays a major role in determining the stereoselectivity" evidence="1">
    <location>
        <position position="157"/>
    </location>
</feature>
<name>ALKD_TREPA</name>
<keyword id="KW-0119">Carbohydrate metabolism</keyword>
<keyword id="KW-0963">Cytoplasm</keyword>
<keyword id="KW-0456">Lyase</keyword>
<keyword id="KW-1185">Reference proteome</keyword>
<keyword id="KW-0704">Schiff base</keyword>